<sequence>MQAFKKLTSSAIPLWLSDIDTDMIIPANFLTQTTKDGYGKSLFHNLKEKDSSFVFNNPDYSNSEILIAGDNFGCGSSREHAVWALTQAGIKVIIAPSFSDIFFNNAAKNGLLLISLDKDTVKELCDKAEDPKFSMTIDLQEQTVSADGSIYSFDYDPFRKDCLIRGLDDMTYLIEHLDIIKQFEQSQRG</sequence>
<feature type="chain" id="PRO_1000063766" description="3-isopropylmalate dehydratase small subunit">
    <location>
        <begin position="1"/>
        <end position="189"/>
    </location>
</feature>
<organism>
    <name type="scientific">Francisella tularensis subsp. holarctica (strain LVS)</name>
    <dbReference type="NCBI Taxonomy" id="376619"/>
    <lineage>
        <taxon>Bacteria</taxon>
        <taxon>Pseudomonadati</taxon>
        <taxon>Pseudomonadota</taxon>
        <taxon>Gammaproteobacteria</taxon>
        <taxon>Thiotrichales</taxon>
        <taxon>Francisellaceae</taxon>
        <taxon>Francisella</taxon>
    </lineage>
</organism>
<gene>
    <name evidence="1" type="primary">leuD</name>
    <name type="ordered locus">FTL_1888</name>
</gene>
<protein>
    <recommendedName>
        <fullName evidence="1">3-isopropylmalate dehydratase small subunit</fullName>
        <ecNumber evidence="1">4.2.1.33</ecNumber>
    </recommendedName>
    <alternativeName>
        <fullName evidence="1">Alpha-IPM isomerase</fullName>
        <shortName evidence="1">IPMI</shortName>
    </alternativeName>
    <alternativeName>
        <fullName evidence="1">Isopropylmalate isomerase</fullName>
    </alternativeName>
</protein>
<reference key="1">
    <citation type="submission" date="2006-03" db="EMBL/GenBank/DDBJ databases">
        <title>Complete genome sequence of Francisella tularensis LVS (Live Vaccine Strain).</title>
        <authorList>
            <person name="Chain P."/>
            <person name="Larimer F."/>
            <person name="Land M."/>
            <person name="Stilwagen S."/>
            <person name="Larsson P."/>
            <person name="Bearden S."/>
            <person name="Chu M."/>
            <person name="Oyston P."/>
            <person name="Forsman M."/>
            <person name="Andersson S."/>
            <person name="Lindler L."/>
            <person name="Titball R."/>
            <person name="Garcia E."/>
        </authorList>
    </citation>
    <scope>NUCLEOTIDE SEQUENCE [LARGE SCALE GENOMIC DNA]</scope>
    <source>
        <strain>LVS</strain>
    </source>
</reference>
<comment type="function">
    <text evidence="1">Catalyzes the isomerization between 2-isopropylmalate and 3-isopropylmalate, via the formation of 2-isopropylmaleate.</text>
</comment>
<comment type="catalytic activity">
    <reaction evidence="1">
        <text>(2R,3S)-3-isopropylmalate = (2S)-2-isopropylmalate</text>
        <dbReference type="Rhea" id="RHEA:32287"/>
        <dbReference type="ChEBI" id="CHEBI:1178"/>
        <dbReference type="ChEBI" id="CHEBI:35121"/>
        <dbReference type="EC" id="4.2.1.33"/>
    </reaction>
</comment>
<comment type="pathway">
    <text evidence="1">Amino-acid biosynthesis; L-leucine biosynthesis; L-leucine from 3-methyl-2-oxobutanoate: step 2/4.</text>
</comment>
<comment type="subunit">
    <text evidence="1">Heterodimer of LeuC and LeuD.</text>
</comment>
<comment type="similarity">
    <text evidence="1">Belongs to the LeuD family. LeuD type 1 subfamily.</text>
</comment>
<proteinExistence type="inferred from homology"/>
<evidence type="ECO:0000255" key="1">
    <source>
        <dbReference type="HAMAP-Rule" id="MF_01031"/>
    </source>
</evidence>
<keyword id="KW-0028">Amino-acid biosynthesis</keyword>
<keyword id="KW-0100">Branched-chain amino acid biosynthesis</keyword>
<keyword id="KW-0432">Leucine biosynthesis</keyword>
<keyword id="KW-0456">Lyase</keyword>
<keyword id="KW-1185">Reference proteome</keyword>
<name>LEUD_FRATH</name>
<dbReference type="EC" id="4.2.1.33" evidence="1"/>
<dbReference type="EMBL" id="AM233362">
    <property type="protein sequence ID" value="CAJ80327.1"/>
    <property type="molecule type" value="Genomic_DNA"/>
</dbReference>
<dbReference type="RefSeq" id="WP_003017457.1">
    <property type="nucleotide sequence ID" value="NZ_CP009694.1"/>
</dbReference>
<dbReference type="SMR" id="Q2A1A1"/>
<dbReference type="GeneID" id="75264441"/>
<dbReference type="KEGG" id="ftl:FTL_1888"/>
<dbReference type="UniPathway" id="UPA00048">
    <property type="reaction ID" value="UER00071"/>
</dbReference>
<dbReference type="Proteomes" id="UP000001944">
    <property type="component" value="Chromosome"/>
</dbReference>
<dbReference type="GO" id="GO:0009316">
    <property type="term" value="C:3-isopropylmalate dehydratase complex"/>
    <property type="evidence" value="ECO:0007669"/>
    <property type="project" value="InterPro"/>
</dbReference>
<dbReference type="GO" id="GO:0003861">
    <property type="term" value="F:3-isopropylmalate dehydratase activity"/>
    <property type="evidence" value="ECO:0007669"/>
    <property type="project" value="UniProtKB-UniRule"/>
</dbReference>
<dbReference type="GO" id="GO:0009098">
    <property type="term" value="P:L-leucine biosynthetic process"/>
    <property type="evidence" value="ECO:0007669"/>
    <property type="project" value="UniProtKB-UniRule"/>
</dbReference>
<dbReference type="CDD" id="cd01577">
    <property type="entry name" value="IPMI_Swivel"/>
    <property type="match status" value="1"/>
</dbReference>
<dbReference type="FunFam" id="3.20.19.10:FF:000003">
    <property type="entry name" value="3-isopropylmalate dehydratase small subunit"/>
    <property type="match status" value="1"/>
</dbReference>
<dbReference type="Gene3D" id="3.20.19.10">
    <property type="entry name" value="Aconitase, domain 4"/>
    <property type="match status" value="1"/>
</dbReference>
<dbReference type="HAMAP" id="MF_01031">
    <property type="entry name" value="LeuD_type1"/>
    <property type="match status" value="1"/>
</dbReference>
<dbReference type="InterPro" id="IPR004431">
    <property type="entry name" value="3-IsopropMal_deHydase_ssu"/>
</dbReference>
<dbReference type="InterPro" id="IPR015928">
    <property type="entry name" value="Aconitase/3IPM_dehydase_swvl"/>
</dbReference>
<dbReference type="InterPro" id="IPR000573">
    <property type="entry name" value="AconitaseA/IPMdHydase_ssu_swvl"/>
</dbReference>
<dbReference type="InterPro" id="IPR033940">
    <property type="entry name" value="IPMI_Swivel"/>
</dbReference>
<dbReference type="InterPro" id="IPR050075">
    <property type="entry name" value="LeuD"/>
</dbReference>
<dbReference type="NCBIfam" id="TIGR00171">
    <property type="entry name" value="leuD"/>
    <property type="match status" value="1"/>
</dbReference>
<dbReference type="NCBIfam" id="NF002458">
    <property type="entry name" value="PRK01641.1"/>
    <property type="match status" value="1"/>
</dbReference>
<dbReference type="PANTHER" id="PTHR43345:SF5">
    <property type="entry name" value="3-ISOPROPYLMALATE DEHYDRATASE SMALL SUBUNIT"/>
    <property type="match status" value="1"/>
</dbReference>
<dbReference type="PANTHER" id="PTHR43345">
    <property type="entry name" value="3-ISOPROPYLMALATE DEHYDRATASE SMALL SUBUNIT 2-RELATED-RELATED"/>
    <property type="match status" value="1"/>
</dbReference>
<dbReference type="Pfam" id="PF00694">
    <property type="entry name" value="Aconitase_C"/>
    <property type="match status" value="1"/>
</dbReference>
<dbReference type="SUPFAM" id="SSF52016">
    <property type="entry name" value="LeuD/IlvD-like"/>
    <property type="match status" value="1"/>
</dbReference>
<accession>Q2A1A1</accession>